<organism>
    <name type="scientific">Salmonella choleraesuis (strain SC-B67)</name>
    <dbReference type="NCBI Taxonomy" id="321314"/>
    <lineage>
        <taxon>Bacteria</taxon>
        <taxon>Pseudomonadati</taxon>
        <taxon>Pseudomonadota</taxon>
        <taxon>Gammaproteobacteria</taxon>
        <taxon>Enterobacterales</taxon>
        <taxon>Enterobacteriaceae</taxon>
        <taxon>Salmonella</taxon>
    </lineage>
</organism>
<reference key="1">
    <citation type="journal article" date="2005" name="Nucleic Acids Res.">
        <title>The genome sequence of Salmonella enterica serovar Choleraesuis, a highly invasive and resistant zoonotic pathogen.</title>
        <authorList>
            <person name="Chiu C.-H."/>
            <person name="Tang P."/>
            <person name="Chu C."/>
            <person name="Hu S."/>
            <person name="Bao Q."/>
            <person name="Yu J."/>
            <person name="Chou Y.-Y."/>
            <person name="Wang H.-S."/>
            <person name="Lee Y.-S."/>
        </authorList>
    </citation>
    <scope>NUCLEOTIDE SEQUENCE [LARGE SCALE GENOMIC DNA]</scope>
    <source>
        <strain>SC-B67</strain>
    </source>
</reference>
<accession>Q57TH4</accession>
<gene>
    <name evidence="1" type="primary">kefC</name>
    <name type="ordered locus">SCH_0081</name>
</gene>
<comment type="function">
    <text evidence="1">Pore-forming subunit of a potassium efflux system that confers protection against electrophiles. Catalyzes K(+)/H(+) antiport.</text>
</comment>
<comment type="subunit">
    <text evidence="1">Homodimer. Interacts with the regulatory subunit KefF.</text>
</comment>
<comment type="subcellular location">
    <subcellularLocation>
        <location evidence="1">Cell inner membrane</location>
        <topology evidence="1">Multi-pass membrane protein</topology>
    </subcellularLocation>
</comment>
<comment type="similarity">
    <text evidence="1">Belongs to the monovalent cation:proton antiporter 2 (CPA2) transporter (TC 2.A.37) family. KefC subfamily.</text>
</comment>
<evidence type="ECO:0000255" key="1">
    <source>
        <dbReference type="HAMAP-Rule" id="MF_01413"/>
    </source>
</evidence>
<evidence type="ECO:0000255" key="2">
    <source>
        <dbReference type="PROSITE-ProRule" id="PRU00543"/>
    </source>
</evidence>
<evidence type="ECO:0000256" key="3">
    <source>
        <dbReference type="SAM" id="MobiDB-lite"/>
    </source>
</evidence>
<protein>
    <recommendedName>
        <fullName evidence="1">Glutathione-regulated potassium-efflux system protein KefC</fullName>
    </recommendedName>
    <alternativeName>
        <fullName evidence="1">K(+)/H(+) antiporter</fullName>
    </alternativeName>
</protein>
<name>KEFC_SALCH</name>
<keyword id="KW-0050">Antiport</keyword>
<keyword id="KW-0997">Cell inner membrane</keyword>
<keyword id="KW-1003">Cell membrane</keyword>
<keyword id="KW-0406">Ion transport</keyword>
<keyword id="KW-0472">Membrane</keyword>
<keyword id="KW-0630">Potassium</keyword>
<keyword id="KW-0633">Potassium transport</keyword>
<keyword id="KW-0812">Transmembrane</keyword>
<keyword id="KW-1133">Transmembrane helix</keyword>
<keyword id="KW-0813">Transport</keyword>
<proteinExistence type="inferred from homology"/>
<dbReference type="EMBL" id="AE017220">
    <property type="protein sequence ID" value="AAX63987.1"/>
    <property type="molecule type" value="Genomic_DNA"/>
</dbReference>
<dbReference type="RefSeq" id="WP_011264181.1">
    <property type="nucleotide sequence ID" value="NC_006905.1"/>
</dbReference>
<dbReference type="SMR" id="Q57TH4"/>
<dbReference type="KEGG" id="sec:SCH_0081"/>
<dbReference type="HOGENOM" id="CLU_005126_9_3_6"/>
<dbReference type="Proteomes" id="UP000000538">
    <property type="component" value="Chromosome"/>
</dbReference>
<dbReference type="GO" id="GO:0005886">
    <property type="term" value="C:plasma membrane"/>
    <property type="evidence" value="ECO:0007669"/>
    <property type="project" value="UniProtKB-SubCell"/>
</dbReference>
<dbReference type="GO" id="GO:0019899">
    <property type="term" value="F:enzyme binding"/>
    <property type="evidence" value="ECO:0007669"/>
    <property type="project" value="InterPro"/>
</dbReference>
<dbReference type="GO" id="GO:0015503">
    <property type="term" value="F:glutathione-regulated potassium exporter activity"/>
    <property type="evidence" value="ECO:0007669"/>
    <property type="project" value="UniProtKB-UniRule"/>
</dbReference>
<dbReference type="GO" id="GO:0015643">
    <property type="term" value="F:toxic substance binding"/>
    <property type="evidence" value="ECO:0007669"/>
    <property type="project" value="InterPro"/>
</dbReference>
<dbReference type="GO" id="GO:1902600">
    <property type="term" value="P:proton transmembrane transport"/>
    <property type="evidence" value="ECO:0007669"/>
    <property type="project" value="InterPro"/>
</dbReference>
<dbReference type="GO" id="GO:0051595">
    <property type="term" value="P:response to methylglyoxal"/>
    <property type="evidence" value="ECO:0007669"/>
    <property type="project" value="InterPro"/>
</dbReference>
<dbReference type="FunFam" id="1.20.1530.20:FF:000001">
    <property type="entry name" value="Glutathione-regulated potassium-efflux system protein KefB"/>
    <property type="match status" value="1"/>
</dbReference>
<dbReference type="FunFam" id="3.40.50.720:FF:000036">
    <property type="entry name" value="Glutathione-regulated potassium-efflux system protein KefB"/>
    <property type="match status" value="1"/>
</dbReference>
<dbReference type="Gene3D" id="1.20.1530.20">
    <property type="match status" value="1"/>
</dbReference>
<dbReference type="Gene3D" id="3.40.50.720">
    <property type="entry name" value="NAD(P)-binding Rossmann-like Domain"/>
    <property type="match status" value="1"/>
</dbReference>
<dbReference type="HAMAP" id="MF_01413">
    <property type="entry name" value="K_H_efflux_KefC"/>
    <property type="match status" value="1"/>
</dbReference>
<dbReference type="InterPro" id="IPR006153">
    <property type="entry name" value="Cation/H_exchanger_TM"/>
</dbReference>
<dbReference type="InterPro" id="IPR004771">
    <property type="entry name" value="K/H_exchanger"/>
</dbReference>
<dbReference type="InterPro" id="IPR023941">
    <property type="entry name" value="K_H_efflux_KefC"/>
</dbReference>
<dbReference type="InterPro" id="IPR006036">
    <property type="entry name" value="K_uptake_TrkA"/>
</dbReference>
<dbReference type="InterPro" id="IPR038770">
    <property type="entry name" value="Na+/solute_symporter_sf"/>
</dbReference>
<dbReference type="InterPro" id="IPR036291">
    <property type="entry name" value="NAD(P)-bd_dom_sf"/>
</dbReference>
<dbReference type="InterPro" id="IPR003148">
    <property type="entry name" value="RCK_N"/>
</dbReference>
<dbReference type="NCBIfam" id="TIGR00932">
    <property type="entry name" value="2a37"/>
    <property type="match status" value="1"/>
</dbReference>
<dbReference type="NCBIfam" id="NF002924">
    <property type="entry name" value="PRK03562.1"/>
    <property type="match status" value="1"/>
</dbReference>
<dbReference type="PANTHER" id="PTHR46157:SF3">
    <property type="entry name" value="GLUTATHIONE-REGULATED POTASSIUM-EFFLUX SYSTEM PROTEIN KEFC"/>
    <property type="match status" value="1"/>
</dbReference>
<dbReference type="PANTHER" id="PTHR46157">
    <property type="entry name" value="K(+) EFFLUX ANTIPORTER 3, CHLOROPLASTIC"/>
    <property type="match status" value="1"/>
</dbReference>
<dbReference type="Pfam" id="PF00999">
    <property type="entry name" value="Na_H_Exchanger"/>
    <property type="match status" value="1"/>
</dbReference>
<dbReference type="Pfam" id="PF02254">
    <property type="entry name" value="TrkA_N"/>
    <property type="match status" value="1"/>
</dbReference>
<dbReference type="PRINTS" id="PR00335">
    <property type="entry name" value="KUPTAKETRKA"/>
</dbReference>
<dbReference type="SUPFAM" id="SSF51735">
    <property type="entry name" value="NAD(P)-binding Rossmann-fold domains"/>
    <property type="match status" value="1"/>
</dbReference>
<dbReference type="PROSITE" id="PS51201">
    <property type="entry name" value="RCK_N"/>
    <property type="match status" value="1"/>
</dbReference>
<feature type="chain" id="PRO_1000087395" description="Glutathione-regulated potassium-efflux system protein KefC">
    <location>
        <begin position="1"/>
        <end position="620"/>
    </location>
</feature>
<feature type="transmembrane region" description="Helical" evidence="1">
    <location>
        <begin position="4"/>
        <end position="24"/>
    </location>
</feature>
<feature type="transmembrane region" description="Helical" evidence="1">
    <location>
        <begin position="26"/>
        <end position="46"/>
    </location>
</feature>
<feature type="transmembrane region" description="Helical" evidence="1">
    <location>
        <begin position="54"/>
        <end position="74"/>
    </location>
</feature>
<feature type="transmembrane region" description="Helical" evidence="1">
    <location>
        <begin position="90"/>
        <end position="110"/>
    </location>
</feature>
<feature type="transmembrane region" description="Helical" evidence="1">
    <location>
        <begin position="114"/>
        <end position="134"/>
    </location>
</feature>
<feature type="transmembrane region" description="Helical" evidence="1">
    <location>
        <begin position="149"/>
        <end position="169"/>
    </location>
</feature>
<feature type="transmembrane region" description="Helical" evidence="1">
    <location>
        <begin position="178"/>
        <end position="198"/>
    </location>
</feature>
<feature type="transmembrane region" description="Helical" evidence="1">
    <location>
        <begin position="218"/>
        <end position="238"/>
    </location>
</feature>
<feature type="transmembrane region" description="Helical" evidence="1">
    <location>
        <begin position="270"/>
        <end position="290"/>
    </location>
</feature>
<feature type="transmembrane region" description="Helical" evidence="1">
    <location>
        <begin position="294"/>
        <end position="314"/>
    </location>
</feature>
<feature type="transmembrane region" description="Helical" evidence="1">
    <location>
        <begin position="327"/>
        <end position="347"/>
    </location>
</feature>
<feature type="transmembrane region" description="Helical" evidence="1">
    <location>
        <begin position="359"/>
        <end position="379"/>
    </location>
</feature>
<feature type="domain" description="RCK N-terminal" evidence="2">
    <location>
        <begin position="399"/>
        <end position="518"/>
    </location>
</feature>
<feature type="region of interest" description="Disordered" evidence="3">
    <location>
        <begin position="599"/>
        <end position="620"/>
    </location>
</feature>
<sequence length="620" mass="67067">MDSHTLLQALIYLGSAALIVPIAVRLGLGSVLGYLIAGCIIGPWGLRLVTDAESILHFAEIGVVLMLFVIGLELDPQRLWKLRASVFGGGALQMVVCGGLIGLFCMFLGLRWQVAELIGMTLALSSTAIAMQAMNERNLTVSQVGRSAFAVLLFQDIAAIPLVAMIPLLAASGASTTLGAFALSALKVAGALALVVLLGRYVTRPALRFVARSGLREVFSAVALFLVFGFGLLLEEVGLSMAMGAFLAGVLLASSEYRHALESDIEPFKGLLLGLFFIGVGMSIDFGTLVENPLRILLLLAGFLAIKIVMLWLVARPLGVPAKQRRWFAVLLGQGSKFAFVVFGAAQMADVLEPEWAKALTLAVALSMAATPIFLVLLTRMEKTATGEAREADEIDEEQPRVIVAGFGRFGQIAGRLLLSSGVKMVVLDHDPDHIETLRKFGMKVFYGDATRMDLLESAGAAKAEVLINAIDDPQTNLQLSELVKSHFPHLQIIARARDVDHYIRLRQAGVAMPERETFEGALKSGRQALEALGLGRYEARERADLFRHFNTRMVEEMAKGENDPLSRAAAYKRTSAMLSEIITEDREHLSLIQRHGWQGTAEGKHSGEAADEPEVKPSI</sequence>